<dbReference type="EC" id="2.4.2.26" evidence="1"/>
<dbReference type="EMBL" id="AJ295749">
    <property type="protein sequence ID" value="CAC16796.2"/>
    <property type="molecule type" value="mRNA"/>
</dbReference>
<dbReference type="SMR" id="Q9EPI0"/>
<dbReference type="FunCoup" id="Q9EPI0">
    <property type="interactions" value="951"/>
</dbReference>
<dbReference type="STRING" id="10116.ENSRNOP00000052446"/>
<dbReference type="CAZy" id="GT14">
    <property type="family name" value="Glycosyltransferase Family 14"/>
</dbReference>
<dbReference type="GlyCosmos" id="Q9EPI0">
    <property type="glycosylation" value="3 sites, No reported glycans"/>
</dbReference>
<dbReference type="GlyGen" id="Q9EPI0">
    <property type="glycosylation" value="5 sites"/>
</dbReference>
<dbReference type="PhosphoSitePlus" id="Q9EPI0"/>
<dbReference type="PaxDb" id="10116-ENSRNOP00000052446"/>
<dbReference type="AGR" id="RGD:619765"/>
<dbReference type="RGD" id="619765">
    <property type="gene designation" value="Xylt2"/>
</dbReference>
<dbReference type="eggNOG" id="KOG0799">
    <property type="taxonomic scope" value="Eukaryota"/>
</dbReference>
<dbReference type="InParanoid" id="Q9EPI0"/>
<dbReference type="PhylomeDB" id="Q9EPI0"/>
<dbReference type="Reactome" id="R-RNO-1971475">
    <property type="pathway name" value="A tetrasaccharide linker sequence is required for GAG synthesis"/>
</dbReference>
<dbReference type="UniPathway" id="UPA00755"/>
<dbReference type="UniPathway" id="UPA00756"/>
<dbReference type="PRO" id="PR:Q9EPI0"/>
<dbReference type="Proteomes" id="UP000002494">
    <property type="component" value="Unplaced"/>
</dbReference>
<dbReference type="GO" id="GO:0005615">
    <property type="term" value="C:extracellular space"/>
    <property type="evidence" value="ECO:0000250"/>
    <property type="project" value="UniProtKB"/>
</dbReference>
<dbReference type="GO" id="GO:0000139">
    <property type="term" value="C:Golgi membrane"/>
    <property type="evidence" value="ECO:0007669"/>
    <property type="project" value="UniProtKB-SubCell"/>
</dbReference>
<dbReference type="GO" id="GO:0000287">
    <property type="term" value="F:magnesium ion binding"/>
    <property type="evidence" value="ECO:0000250"/>
    <property type="project" value="UniProtKB"/>
</dbReference>
<dbReference type="GO" id="GO:0030145">
    <property type="term" value="F:manganese ion binding"/>
    <property type="evidence" value="ECO:0000250"/>
    <property type="project" value="UniProtKB"/>
</dbReference>
<dbReference type="GO" id="GO:0030158">
    <property type="term" value="F:protein xylosyltransferase activity"/>
    <property type="evidence" value="ECO:0000250"/>
    <property type="project" value="UniProtKB"/>
</dbReference>
<dbReference type="GO" id="GO:0050650">
    <property type="term" value="P:chondroitin sulfate proteoglycan biosynthetic process"/>
    <property type="evidence" value="ECO:0000250"/>
    <property type="project" value="UniProtKB"/>
</dbReference>
<dbReference type="GO" id="GO:0006024">
    <property type="term" value="P:glycosaminoglycan biosynthetic process"/>
    <property type="evidence" value="ECO:0000266"/>
    <property type="project" value="RGD"/>
</dbReference>
<dbReference type="GO" id="GO:0015012">
    <property type="term" value="P:heparan sulfate proteoglycan biosynthetic process"/>
    <property type="evidence" value="ECO:0000250"/>
    <property type="project" value="UniProtKB"/>
</dbReference>
<dbReference type="GO" id="GO:0030210">
    <property type="term" value="P:heparin proteoglycan biosynthetic process"/>
    <property type="evidence" value="ECO:0000266"/>
    <property type="project" value="RGD"/>
</dbReference>
<dbReference type="GO" id="GO:0030166">
    <property type="term" value="P:proteoglycan biosynthetic process"/>
    <property type="evidence" value="ECO:0000266"/>
    <property type="project" value="RGD"/>
</dbReference>
<dbReference type="InterPro" id="IPR003406">
    <property type="entry name" value="Glyco_trans_14"/>
</dbReference>
<dbReference type="InterPro" id="IPR043538">
    <property type="entry name" value="XYLT"/>
</dbReference>
<dbReference type="InterPro" id="IPR024448">
    <property type="entry name" value="XylT_C"/>
</dbReference>
<dbReference type="PANTHER" id="PTHR46025:SF1">
    <property type="entry name" value="XYLOSYLTRANSFERASE 2"/>
    <property type="match status" value="1"/>
</dbReference>
<dbReference type="PANTHER" id="PTHR46025">
    <property type="entry name" value="XYLOSYLTRANSFERASE OXT"/>
    <property type="match status" value="1"/>
</dbReference>
<dbReference type="Pfam" id="PF02485">
    <property type="entry name" value="Branch"/>
    <property type="match status" value="1"/>
</dbReference>
<dbReference type="Pfam" id="PF12529">
    <property type="entry name" value="Xylo_C"/>
    <property type="match status" value="1"/>
</dbReference>
<organism>
    <name type="scientific">Rattus norvegicus</name>
    <name type="common">Rat</name>
    <dbReference type="NCBI Taxonomy" id="10116"/>
    <lineage>
        <taxon>Eukaryota</taxon>
        <taxon>Metazoa</taxon>
        <taxon>Chordata</taxon>
        <taxon>Craniata</taxon>
        <taxon>Vertebrata</taxon>
        <taxon>Euteleostomi</taxon>
        <taxon>Mammalia</taxon>
        <taxon>Eutheria</taxon>
        <taxon>Euarchontoglires</taxon>
        <taxon>Glires</taxon>
        <taxon>Rodentia</taxon>
        <taxon>Myomorpha</taxon>
        <taxon>Muroidea</taxon>
        <taxon>Muridae</taxon>
        <taxon>Murinae</taxon>
        <taxon>Rattus</taxon>
    </lineage>
</organism>
<sequence length="864" mass="96790">MVASARVQKLVRRYKLAIATALAILLLQGLVVWSFSGLEEDEPGEKGRQRKPRPLDPGEGSKDTDSSAGRRGSAGRRHGRWRGRAESPGVPVAKVVRAVTSRQRASRRVPPAPPPEAPGRQNLSGAAAGEALIGAAGFPQHGDTGSVEGAPQPTDNSFTPKCEIVGKDALSALARASTKHCQQEIANVVCLHQAGNLMPKSVPRHCQLAGKVSPGIQWEEVRAQQPVSGPLVRIAYMLVVHGRAVRQLKRLLKAVYHEEHFFYIHVDKRSNYLYREVVELAQHYDNVRVTPWRMVTIWGGASLLRMYLRSMKDLLETPGWTWDFFINLSATDYPTRTNEELVAFLSKNRDKNFLKSHGRDNSRFIKKQGLDRLFHECDSHMWRLGERQIPAGIVVDGGSDWFVLTRSFVEYVVYTEDPLVAQLRQFYTYTLLPAESFFHTVLENSPACESLVDNNLRVTNWNRKLGCKCQYKHIVDWCGCSPNDFKPQDFLRLQQVSRPTFFARKFESTVNQEVLEILDFHLYGSYPPGTPALKAYWENIYDMADGPSGLSDVLLTAYTAFARISLRHAATVSPLATAVCRFEPRGLPSSVHLYFYDDHFQGYLVTQAVQPSAQGPAETLEMWLMPQRLLKPLGHSDQASRLQSLEVGTEWDPKERLFRNFGGLLGPLDEPVAMQRWARGPNLTATVVWIDPTYVVATSYDITVDADTEVTQYKPPLSLPLRPGAWTVRLLQFWEPLGETRFLVLPLTFNHKLPLRKDDASWLHAGPPHNEYMEQSFQGLSGILNLPQPEAVEEAARRHTELTGPALEAWTDGELSSFWSVAGLCAIGPSSCPSLELCRLTSWSSLSPDPKSELGPVKADGRLR</sequence>
<accession>Q9EPI0</accession>
<gene>
    <name type="primary">Xylt2</name>
</gene>
<comment type="function">
    <text evidence="2 3">Catalyzes the first step in the biosynthesis of chondroitin sulfate, heparan sulfate and dermatan sulfate proteoglycans, such as DCN (By similarity). Transfers D-xylose from UDP-D-xylose to specific serine residues of the core protein (By similarity).</text>
</comment>
<comment type="catalytic activity">
    <reaction evidence="3">
        <text>UDP-alpha-D-xylose + L-seryl-[protein] = 3-O-(beta-D-xylosyl)-L-seryl-[protein] + UDP + H(+)</text>
        <dbReference type="Rhea" id="RHEA:50192"/>
        <dbReference type="Rhea" id="RHEA-COMP:9863"/>
        <dbReference type="Rhea" id="RHEA-COMP:12567"/>
        <dbReference type="ChEBI" id="CHEBI:15378"/>
        <dbReference type="ChEBI" id="CHEBI:29999"/>
        <dbReference type="ChEBI" id="CHEBI:57632"/>
        <dbReference type="ChEBI" id="CHEBI:58223"/>
        <dbReference type="ChEBI" id="CHEBI:132085"/>
        <dbReference type="EC" id="2.4.2.26"/>
    </reaction>
</comment>
<comment type="cofactor">
    <cofactor evidence="3">
        <name>Mg(2+)</name>
        <dbReference type="ChEBI" id="CHEBI:18420"/>
    </cofactor>
    <cofactor evidence="3">
        <name>Mn(2+)</name>
        <dbReference type="ChEBI" id="CHEBI:29035"/>
    </cofactor>
    <text evidence="3">Active with either Mg(2+) or Mn(2+), but activity is highest when both are present.</text>
</comment>
<comment type="pathway">
    <text evidence="3">Glycan metabolism; chondroitin sulfate biosynthesis.</text>
</comment>
<comment type="pathway">
    <text evidence="3">Glycan metabolism; heparan sulfate biosynthesis.</text>
</comment>
<comment type="subunit">
    <text evidence="1">Monomer.</text>
</comment>
<comment type="subcellular location">
    <subcellularLocation>
        <location evidence="3">Golgi apparatus membrane</location>
        <topology evidence="3">Single-pass type II membrane protein</topology>
    </subcellularLocation>
    <subcellularLocation>
        <location evidence="3">Secreted</location>
    </subcellularLocation>
</comment>
<comment type="PTM">
    <text evidence="1">Contains disulfide bonds.</text>
</comment>
<comment type="similarity">
    <text evidence="6">Belongs to the glycosyltransferase 14 family. XylT subfamily.</text>
</comment>
<reference key="1">
    <citation type="journal article" date="2000" name="J. Mol. Biol.">
        <title>Molecular cloning and expression of human UDP-D-xylose:proteoglycan core protein beta-D-xylosyltransferase and its first isoform XT-II.</title>
        <authorList>
            <person name="Goetting C."/>
            <person name="Kuhn J."/>
            <person name="Zahn R."/>
            <person name="Brinkmann T."/>
            <person name="Kleesiek K."/>
        </authorList>
    </citation>
    <scope>NUCLEOTIDE SEQUENCE [MRNA]</scope>
    <source>
        <tissue>Liver</tissue>
    </source>
</reference>
<name>XYLT2_RAT</name>
<evidence type="ECO:0000250" key="1">
    <source>
        <dbReference type="UniProtKB" id="Q86Y38"/>
    </source>
</evidence>
<evidence type="ECO:0000250" key="2">
    <source>
        <dbReference type="UniProtKB" id="Q9EPL0"/>
    </source>
</evidence>
<evidence type="ECO:0000250" key="3">
    <source>
        <dbReference type="UniProtKB" id="Q9H1B5"/>
    </source>
</evidence>
<evidence type="ECO:0000255" key="4"/>
<evidence type="ECO:0000256" key="5">
    <source>
        <dbReference type="SAM" id="MobiDB-lite"/>
    </source>
</evidence>
<evidence type="ECO:0000305" key="6"/>
<proteinExistence type="evidence at transcript level"/>
<protein>
    <recommendedName>
        <fullName>Xylosyltransferase 2</fullName>
        <ecNumber evidence="1">2.4.2.26</ecNumber>
    </recommendedName>
    <alternativeName>
        <fullName>Peptide O-xylosyltransferase 2</fullName>
    </alternativeName>
    <alternativeName>
        <fullName>Xylosyltransferase II</fullName>
    </alternativeName>
</protein>
<keyword id="KW-1015">Disulfide bond</keyword>
<keyword id="KW-0325">Glycoprotein</keyword>
<keyword id="KW-0328">Glycosyltransferase</keyword>
<keyword id="KW-0333">Golgi apparatus</keyword>
<keyword id="KW-0460">Magnesium</keyword>
<keyword id="KW-0464">Manganese</keyword>
<keyword id="KW-0472">Membrane</keyword>
<keyword id="KW-0479">Metal-binding</keyword>
<keyword id="KW-1185">Reference proteome</keyword>
<keyword id="KW-0964">Secreted</keyword>
<keyword id="KW-0735">Signal-anchor</keyword>
<keyword id="KW-0808">Transferase</keyword>
<keyword id="KW-0812">Transmembrane</keyword>
<keyword id="KW-1133">Transmembrane helix</keyword>
<feature type="chain" id="PRO_0000191409" description="Xylosyltransferase 2">
    <location>
        <begin position="1"/>
        <end position="864"/>
    </location>
</feature>
<feature type="topological domain" description="Cytoplasmic" evidence="4">
    <location>
        <begin position="1"/>
        <end position="15"/>
    </location>
</feature>
<feature type="transmembrane region" description="Helical; Signal-anchor for type II membrane protein" evidence="4">
    <location>
        <begin position="16"/>
        <end position="36"/>
    </location>
</feature>
<feature type="topological domain" description="Lumenal" evidence="4">
    <location>
        <begin position="37"/>
        <end position="864"/>
    </location>
</feature>
<feature type="region of interest" description="Disordered" evidence="5">
    <location>
        <begin position="39"/>
        <end position="123"/>
    </location>
</feature>
<feature type="region of interest" description="Disordered" evidence="5">
    <location>
        <begin position="136"/>
        <end position="158"/>
    </location>
</feature>
<feature type="compositionally biased region" description="Basic and acidic residues" evidence="5">
    <location>
        <begin position="53"/>
        <end position="65"/>
    </location>
</feature>
<feature type="compositionally biased region" description="Basic residues" evidence="5">
    <location>
        <begin position="73"/>
        <end position="82"/>
    </location>
</feature>
<feature type="binding site" evidence="1">
    <location>
        <position position="239"/>
    </location>
    <ligand>
        <name>UDP-alpha-D-xylose</name>
        <dbReference type="ChEBI" id="CHEBI:57632"/>
    </ligand>
</feature>
<feature type="binding site" evidence="1">
    <location>
        <position position="267"/>
    </location>
    <ligand>
        <name>UDP-alpha-D-xylose</name>
        <dbReference type="ChEBI" id="CHEBI:57632"/>
    </ligand>
</feature>
<feature type="binding site" evidence="1">
    <location>
        <begin position="296"/>
        <end position="298"/>
    </location>
    <ligand>
        <name>UDP-alpha-D-xylose</name>
        <dbReference type="ChEBI" id="CHEBI:57632"/>
    </ligand>
</feature>
<feature type="binding site" evidence="1">
    <location>
        <begin position="400"/>
        <end position="401"/>
    </location>
    <ligand>
        <name>UDP-alpha-D-xylose</name>
        <dbReference type="ChEBI" id="CHEBI:57632"/>
    </ligand>
</feature>
<feature type="binding site" evidence="1">
    <location>
        <position position="481"/>
    </location>
    <ligand>
        <name>UDP-alpha-D-xylose</name>
        <dbReference type="ChEBI" id="CHEBI:57632"/>
    </ligand>
</feature>
<feature type="binding site" evidence="1">
    <location>
        <begin position="504"/>
        <end position="505"/>
    </location>
    <ligand>
        <name>UDP-alpha-D-xylose</name>
        <dbReference type="ChEBI" id="CHEBI:57632"/>
    </ligand>
</feature>
<feature type="glycosylation site" description="N-linked (GlcNAc...) asparagine" evidence="4">
    <location>
        <position position="122"/>
    </location>
</feature>
<feature type="glycosylation site" description="N-linked (GlcNAc...) asparagine" evidence="4">
    <location>
        <position position="327"/>
    </location>
</feature>
<feature type="glycosylation site" description="N-linked (GlcNAc...) asparagine" evidence="4">
    <location>
        <position position="682"/>
    </location>
</feature>
<feature type="disulfide bond" evidence="1">
    <location>
        <begin position="162"/>
        <end position="190"/>
    </location>
</feature>
<feature type="disulfide bond" evidence="1">
    <location>
        <begin position="206"/>
        <end position="448"/>
    </location>
</feature>
<feature type="disulfide bond" evidence="1">
    <location>
        <begin position="467"/>
        <end position="480"/>
    </location>
</feature>
<feature type="disulfide bond" evidence="1">
    <location>
        <begin position="469"/>
        <end position="478"/>
    </location>
</feature>
<feature type="disulfide bond" evidence="1">
    <location>
        <begin position="580"/>
        <end position="832"/>
    </location>
</feature>
<feature type="disulfide bond" evidence="1">
    <location>
        <begin position="825"/>
        <end position="838"/>
    </location>
</feature>